<comment type="function">
    <text evidence="4">Secreted protein required for appressorial penetration of intact host epidermal cells and for pathogenicit, but not for subsequent biotrophic and necrotrophic colonization of leaves.</text>
</comment>
<comment type="subunit">
    <text evidence="7">Homodimer; disulfide-linked (Probable). Dimerization can possibly extend to multimerisation (Probable).</text>
</comment>
<comment type="subcellular location">
    <subcellularLocation>
        <location evidence="4">Secreted</location>
    </subcellularLocation>
</comment>
<comment type="induction">
    <text evidence="2 3 4">Expressed at all stages of pathogenesis.</text>
</comment>
<comment type="disruption phenotype">
    <text evidence="4">Impairs pathogenicity (PubMed:31599055). Forms pressurised appressoria but is hampered in forming penetration pores and fails to differentiate a penetration peg (PubMed:31599055).</text>
</comment>
<comment type="similarity">
    <text evidence="6">Belongs to the MC69 virulence factor family.</text>
</comment>
<dbReference type="EMBL" id="GG697345">
    <property type="protein sequence ID" value="EFQ29542.1"/>
    <property type="molecule type" value="Genomic_DNA"/>
</dbReference>
<dbReference type="RefSeq" id="XP_008093562.1">
    <property type="nucleotide sequence ID" value="XM_008095371.1"/>
</dbReference>
<dbReference type="STRING" id="645133.E3QFA4"/>
<dbReference type="EnsemblFungi" id="EFQ29542">
    <property type="protein sequence ID" value="EFQ29542"/>
    <property type="gene ID" value="GLRG_04686"/>
</dbReference>
<dbReference type="GeneID" id="24410051"/>
<dbReference type="VEuPathDB" id="FungiDB:GLRG_04686"/>
<dbReference type="eggNOG" id="ENOG502SV3A">
    <property type="taxonomic scope" value="Eukaryota"/>
</dbReference>
<dbReference type="HOGENOM" id="CLU_205482_0_0_1"/>
<dbReference type="OrthoDB" id="5144659at2759"/>
<dbReference type="PHI-base" id="PHI:10748"/>
<dbReference type="Proteomes" id="UP000008782">
    <property type="component" value="Unassembled WGS sequence"/>
</dbReference>
<dbReference type="GO" id="GO:0005576">
    <property type="term" value="C:extracellular region"/>
    <property type="evidence" value="ECO:0007669"/>
    <property type="project" value="UniProtKB-SubCell"/>
</dbReference>
<reference key="1">
    <citation type="journal article" date="2012" name="Nat. Genet.">
        <title>Lifestyle transitions in plant pathogenic Colletotrichum fungi deciphered by genome and transcriptome analyses.</title>
        <authorList>
            <person name="O'Connell R.J."/>
            <person name="Thon M.R."/>
            <person name="Hacquard S."/>
            <person name="Amyotte S.G."/>
            <person name="Kleemann J."/>
            <person name="Torres M.F."/>
            <person name="Damm U."/>
            <person name="Buiate E.A."/>
            <person name="Epstein L."/>
            <person name="Alkan N."/>
            <person name="Altmueller J."/>
            <person name="Alvarado-Balderrama L."/>
            <person name="Bauser C.A."/>
            <person name="Becker C."/>
            <person name="Birren B.W."/>
            <person name="Chen Z."/>
            <person name="Choi J."/>
            <person name="Crouch J.A."/>
            <person name="Duvick J.P."/>
            <person name="Farman M.A."/>
            <person name="Gan P."/>
            <person name="Heiman D."/>
            <person name="Henrissat B."/>
            <person name="Howard R.J."/>
            <person name="Kabbage M."/>
            <person name="Koch C."/>
            <person name="Kracher B."/>
            <person name="Kubo Y."/>
            <person name="Law A.D."/>
            <person name="Lebrun M.-H."/>
            <person name="Lee Y.-H."/>
            <person name="Miyara I."/>
            <person name="Moore N."/>
            <person name="Neumann U."/>
            <person name="Nordstroem K."/>
            <person name="Panaccione D.G."/>
            <person name="Panstruga R."/>
            <person name="Place M."/>
            <person name="Proctor R.H."/>
            <person name="Prusky D."/>
            <person name="Rech G."/>
            <person name="Reinhardt R."/>
            <person name="Rollins J.A."/>
            <person name="Rounsley S."/>
            <person name="Schardl C.L."/>
            <person name="Schwartz D.C."/>
            <person name="Shenoy N."/>
            <person name="Shirasu K."/>
            <person name="Sikhakolli U.R."/>
            <person name="Stueber K."/>
            <person name="Sukno S.A."/>
            <person name="Sweigard J.A."/>
            <person name="Takano Y."/>
            <person name="Takahara H."/>
            <person name="Trail F."/>
            <person name="van der Does H.C."/>
            <person name="Voll L.M."/>
            <person name="Will I."/>
            <person name="Young S."/>
            <person name="Zeng Q."/>
            <person name="Zhang J."/>
            <person name="Zhou S."/>
            <person name="Dickman M.B."/>
            <person name="Schulze-Lefert P."/>
            <person name="Ver Loren van Themaat E."/>
            <person name="Ma L.-J."/>
            <person name="Vaillancourt L.J."/>
        </authorList>
    </citation>
    <scope>NUCLEOTIDE SEQUENCE [LARGE SCALE GENOMIC DNA]</scope>
    <scope>INDUCTION</scope>
    <source>
        <strain>M1.001 / M2 / FGSC 10212</strain>
    </source>
</reference>
<reference key="2">
    <citation type="journal article" date="2016" name="BMC Genomics">
        <title>A Colletotrichum graminicola mutant deficient in the establishment of biotrophy reveals early transcriptional events in the maize anthracnose disease interaction.</title>
        <authorList>
            <person name="Torres M.F."/>
            <person name="Ghaffari N."/>
            <person name="Buiate E.A."/>
            <person name="Moore N."/>
            <person name="Schwartz S."/>
            <person name="Johnson C.D."/>
            <person name="Vaillancourt L.J."/>
        </authorList>
    </citation>
    <scope>INDUCTION</scope>
</reference>
<reference key="3">
    <citation type="journal article" date="2019" name="Environ. Microbiol.">
        <title>Two genes in a pathogenicity gene cluster encoding secreted proteins are required for appressorial penetration and infection of the maize anthracnose fungus Colletotrichum graminicola.</title>
        <authorList>
            <person name="Eisermann I."/>
            <person name="Weihmann F."/>
            <person name="Krijger J.J."/>
            <person name="Kroeling C."/>
            <person name="Hause G."/>
            <person name="Menzel M."/>
            <person name="Pienkny S."/>
            <person name="Kiesow A."/>
            <person name="Deising H.B."/>
            <person name="Wirsel S.G.R."/>
        </authorList>
    </citation>
    <scope>FUNCTION</scope>
    <scope>DISRUPTION PHENOTYPE</scope>
    <scope>SUBCELLULAR LOCATION</scope>
    <scope>INDUCTION</scope>
    <scope>DISULFIDE BOND</scope>
    <scope>SUBUNIT</scope>
</reference>
<proteinExistence type="evidence at protein level"/>
<gene>
    <name evidence="5" type="primary">CLU5a</name>
    <name type="ORF">GLRG_04686</name>
</gene>
<accession>E3QFA4</accession>
<keyword id="KW-1015">Disulfide bond</keyword>
<keyword id="KW-1185">Reference proteome</keyword>
<keyword id="KW-0964">Secreted</keyword>
<keyword id="KW-0732">Signal</keyword>
<keyword id="KW-0843">Virulence</keyword>
<evidence type="ECO:0000255" key="1"/>
<evidence type="ECO:0000269" key="2">
    <source>
    </source>
</evidence>
<evidence type="ECO:0000269" key="3">
    <source>
    </source>
</evidence>
<evidence type="ECO:0000269" key="4">
    <source>
    </source>
</evidence>
<evidence type="ECO:0000303" key="5">
    <source>
    </source>
</evidence>
<evidence type="ECO:0000305" key="6"/>
<evidence type="ECO:0000305" key="7">
    <source>
    </source>
</evidence>
<feature type="signal peptide" evidence="1">
    <location>
        <begin position="1"/>
        <end position="18"/>
    </location>
</feature>
<feature type="chain" id="PRO_5003180371" description="Secreted virulence factor CLU5a">
    <location>
        <begin position="19"/>
        <end position="56"/>
    </location>
</feature>
<feature type="disulfide bond" description="Interchain (with C-51)" evidence="7">
    <location>
        <position position="41"/>
    </location>
</feature>
<feature type="disulfide bond" description="Interchain (with C-41)" evidence="7">
    <location>
        <position position="51"/>
    </location>
</feature>
<organism>
    <name type="scientific">Colletotrichum graminicola (strain M1.001 / M2 / FGSC 10212)</name>
    <name type="common">Maize anthracnose fungus</name>
    <name type="synonym">Glomerella graminicola</name>
    <dbReference type="NCBI Taxonomy" id="645133"/>
    <lineage>
        <taxon>Eukaryota</taxon>
        <taxon>Fungi</taxon>
        <taxon>Dikarya</taxon>
        <taxon>Ascomycota</taxon>
        <taxon>Pezizomycotina</taxon>
        <taxon>Sordariomycetes</taxon>
        <taxon>Hypocreomycetidae</taxon>
        <taxon>Glomerellales</taxon>
        <taxon>Glomerellaceae</taxon>
        <taxon>Colletotrichum</taxon>
        <taxon>Colletotrichum graminicola species complex</taxon>
    </lineage>
</organism>
<protein>
    <recommendedName>
        <fullName evidence="5">Secreted virulence factor CLU5a</fullName>
    </recommendedName>
    <alternativeName>
        <fullName evidence="5">Pathogenicity cluster 5 protein a</fullName>
    </alternativeName>
</protein>
<sequence length="56" mass="5682">MKVSLTLLATLCASLASAGVVITPVHQDQVVPAAQKVAGDCFFGVVTPQGCAPLRT</sequence>
<name>MC69_COLGM</name>